<reference key="1">
    <citation type="journal article" date="2015" name="RSC Adv.">
        <title>Insight into the structural and functional features of myoglobin from Hystrix cristata L. and Rangifer tarandus L.</title>
        <authorList>
            <person name="Di Guiseppe A.M.A."/>
            <person name="Caso J.V."/>
            <person name="Severino V."/>
            <person name="Ragucci S."/>
            <person name="Chambery A."/>
            <person name="Russo R."/>
            <person name="Fattorusso R."/>
            <person name="Ferreras J.M."/>
            <person name="Russo L."/>
            <person name="Di Maro A."/>
        </authorList>
    </citation>
    <scope>PROTEIN SEQUENCE OF 2-154</scope>
    <scope>SUBUNIT</scope>
    <scope>STRUCTURE BY NMR OF 2-154</scope>
    <scope>MASS SPECTROMETRY</scope>
    <scope>IDENTIFICATION BY MASS SPECTROMETRY</scope>
    <source>
        <tissue evidence="8">Muscle</tissue>
    </source>
</reference>
<protein>
    <recommendedName>
        <fullName evidence="8">Myoglobin</fullName>
    </recommendedName>
    <alternativeName>
        <fullName evidence="1">Nitrite reductase MB</fullName>
        <ecNumber evidence="1">1.7.-.-</ecNumber>
    </alternativeName>
    <alternativeName>
        <fullName evidence="1">Pseudoperoxidase MB</fullName>
        <ecNumber evidence="1">1.11.1.-</ecNumber>
    </alternativeName>
</protein>
<feature type="initiator methionine" description="Removed" evidence="9">
    <location>
        <position position="1"/>
    </location>
</feature>
<feature type="chain" id="PRO_0000438693" description="Myoglobin" evidence="7">
    <location>
        <begin position="2"/>
        <end position="154"/>
    </location>
</feature>
<feature type="domain" description="Globin" evidence="6">
    <location>
        <begin position="2"/>
        <end position="148"/>
    </location>
</feature>
<feature type="binding site" evidence="4">
    <location>
        <position position="65"/>
    </location>
    <ligand>
        <name>nitrite</name>
        <dbReference type="ChEBI" id="CHEBI:16301"/>
    </ligand>
</feature>
<feature type="binding site" evidence="2 6">
    <location>
        <position position="65"/>
    </location>
    <ligand>
        <name>O2</name>
        <dbReference type="ChEBI" id="CHEBI:15379"/>
    </ligand>
</feature>
<feature type="binding site" description="proximal binding residue" evidence="1">
    <location>
        <position position="94"/>
    </location>
    <ligand>
        <name>heme b</name>
        <dbReference type="ChEBI" id="CHEBI:60344"/>
    </ligand>
    <ligandPart>
        <name>Fe</name>
        <dbReference type="ChEBI" id="CHEBI:18248"/>
    </ligandPart>
</feature>
<feature type="modified residue" description="Phosphoserine" evidence="5">
    <location>
        <position position="4"/>
    </location>
</feature>
<feature type="modified residue" description="Phosphothreonine" evidence="3">
    <location>
        <position position="68"/>
    </location>
</feature>
<keyword id="KW-0963">Cytoplasm</keyword>
<keyword id="KW-0903">Direct protein sequencing</keyword>
<keyword id="KW-0349">Heme</keyword>
<keyword id="KW-0408">Iron</keyword>
<keyword id="KW-0479">Metal-binding</keyword>
<keyword id="KW-0514">Muscle protein</keyword>
<keyword id="KW-0560">Oxidoreductase</keyword>
<keyword id="KW-0561">Oxygen transport</keyword>
<keyword id="KW-0597">Phosphoprotein</keyword>
<keyword id="KW-0813">Transport</keyword>
<sequence>MGLSDGEWQLVLNAWGKVEADVAGHGQEVLIRLFTGHPETLEKFDKFKHLKTEAEMKASEDLKKHGNTVLTALGGILKKKGHHEAEVKHLAESHANKHKIPVKYLEFISDAIIHVLHAKHPSDFGADAQGAMSKALELFRNDMAAQYKVLGFQG</sequence>
<name>MYG_RANTA</name>
<dbReference type="EC" id="1.7.-.-" evidence="1"/>
<dbReference type="EC" id="1.11.1.-" evidence="1"/>
<dbReference type="SMR" id="C0HJR0"/>
<dbReference type="GO" id="GO:0070062">
    <property type="term" value="C:extracellular exosome"/>
    <property type="evidence" value="ECO:0007669"/>
    <property type="project" value="TreeGrafter"/>
</dbReference>
<dbReference type="GO" id="GO:0016528">
    <property type="term" value="C:sarcoplasm"/>
    <property type="evidence" value="ECO:0000250"/>
    <property type="project" value="UniProtKB"/>
</dbReference>
<dbReference type="GO" id="GO:0020037">
    <property type="term" value="F:heme binding"/>
    <property type="evidence" value="ECO:0007669"/>
    <property type="project" value="InterPro"/>
</dbReference>
<dbReference type="GO" id="GO:0046872">
    <property type="term" value="F:metal ion binding"/>
    <property type="evidence" value="ECO:0007669"/>
    <property type="project" value="UniProtKB-KW"/>
</dbReference>
<dbReference type="GO" id="GO:0098809">
    <property type="term" value="F:nitrite reductase activity"/>
    <property type="evidence" value="ECO:0000250"/>
    <property type="project" value="UniProtKB"/>
</dbReference>
<dbReference type="GO" id="GO:0019825">
    <property type="term" value="F:oxygen binding"/>
    <property type="evidence" value="ECO:0007669"/>
    <property type="project" value="InterPro"/>
</dbReference>
<dbReference type="GO" id="GO:0005344">
    <property type="term" value="F:oxygen carrier activity"/>
    <property type="evidence" value="ECO:0000250"/>
    <property type="project" value="UniProtKB"/>
</dbReference>
<dbReference type="GO" id="GO:0004601">
    <property type="term" value="F:peroxidase activity"/>
    <property type="evidence" value="ECO:0000250"/>
    <property type="project" value="UniProtKB"/>
</dbReference>
<dbReference type="GO" id="GO:0019430">
    <property type="term" value="P:removal of superoxide radicals"/>
    <property type="evidence" value="ECO:0000250"/>
    <property type="project" value="UniProtKB"/>
</dbReference>
<dbReference type="Gene3D" id="6.10.140.2100">
    <property type="match status" value="1"/>
</dbReference>
<dbReference type="Gene3D" id="6.10.140.2110">
    <property type="match status" value="1"/>
</dbReference>
<dbReference type="InterPro" id="IPR000971">
    <property type="entry name" value="Globin"/>
</dbReference>
<dbReference type="InterPro" id="IPR009050">
    <property type="entry name" value="Globin-like_sf"/>
</dbReference>
<dbReference type="InterPro" id="IPR002335">
    <property type="entry name" value="Myoglobin"/>
</dbReference>
<dbReference type="PANTHER" id="PTHR47132">
    <property type="entry name" value="MYOGLOBIN"/>
    <property type="match status" value="1"/>
</dbReference>
<dbReference type="PANTHER" id="PTHR47132:SF1">
    <property type="entry name" value="MYOGLOBIN"/>
    <property type="match status" value="1"/>
</dbReference>
<dbReference type="Pfam" id="PF00042">
    <property type="entry name" value="Globin"/>
    <property type="match status" value="1"/>
</dbReference>
<dbReference type="PRINTS" id="PR00613">
    <property type="entry name" value="MYOGLOBIN"/>
</dbReference>
<dbReference type="SUPFAM" id="SSF46458">
    <property type="entry name" value="Globin-like"/>
    <property type="match status" value="1"/>
</dbReference>
<dbReference type="PROSITE" id="PS01033">
    <property type="entry name" value="GLOBIN"/>
    <property type="match status" value="1"/>
</dbReference>
<evidence type="ECO:0000250" key="1">
    <source>
        <dbReference type="UniProtKB" id="P02144"/>
    </source>
</evidence>
<evidence type="ECO:0000250" key="2">
    <source>
        <dbReference type="UniProtKB" id="P02189"/>
    </source>
</evidence>
<evidence type="ECO:0000250" key="3">
    <source>
        <dbReference type="UniProtKB" id="P04247"/>
    </source>
</evidence>
<evidence type="ECO:0000250" key="4">
    <source>
        <dbReference type="UniProtKB" id="P68082"/>
    </source>
</evidence>
<evidence type="ECO:0000250" key="5">
    <source>
        <dbReference type="UniProtKB" id="Q9QZ76"/>
    </source>
</evidence>
<evidence type="ECO:0000255" key="6">
    <source>
        <dbReference type="PROSITE-ProRule" id="PRU00238"/>
    </source>
</evidence>
<evidence type="ECO:0000269" key="7">
    <source ref="1"/>
</evidence>
<evidence type="ECO:0000303" key="8">
    <source ref="1"/>
</evidence>
<evidence type="ECO:0000305" key="9">
    <source ref="1"/>
</evidence>
<organism>
    <name type="scientific">Rangifer tarandus</name>
    <name type="common">Reindeer</name>
    <name type="synonym">Cervus tarandus</name>
    <dbReference type="NCBI Taxonomy" id="9870"/>
    <lineage>
        <taxon>Eukaryota</taxon>
        <taxon>Metazoa</taxon>
        <taxon>Chordata</taxon>
        <taxon>Craniata</taxon>
        <taxon>Vertebrata</taxon>
        <taxon>Euteleostomi</taxon>
        <taxon>Mammalia</taxon>
        <taxon>Eutheria</taxon>
        <taxon>Laurasiatheria</taxon>
        <taxon>Artiodactyla</taxon>
        <taxon>Ruminantia</taxon>
        <taxon>Pecora</taxon>
        <taxon>Cervidae</taxon>
        <taxon>Odocoileinae</taxon>
        <taxon>Rangifer</taxon>
    </lineage>
</organism>
<accession>C0HJR0</accession>
<comment type="function">
    <text evidence="1">Monomeric heme protein which primary function is to store oxygen and facilitate its diffusion within muscle tissues. Reversibly binds oxygen through a pentacoordinated heme iron and enables its timely and efficient release as needed during periods of heightened demand. Depending on the oxidative conditions of tissues and cells, and in addition to its ability to bind oxygen, it also has a nitrite reductase activity whereby it regulates the production of bioactive nitric oxide. Under stress conditions, like hypoxia and anoxia, it also protects cells against reactive oxygen species thanks to its pseudoperoxidase activity.</text>
</comment>
<comment type="catalytic activity">
    <reaction evidence="1">
        <text>Fe(III)-heme b-[protein] + nitric oxide + H2O = Fe(II)-heme b-[protein] + nitrite + 2 H(+)</text>
        <dbReference type="Rhea" id="RHEA:77711"/>
        <dbReference type="Rhea" id="RHEA-COMP:18975"/>
        <dbReference type="Rhea" id="RHEA-COMP:18976"/>
        <dbReference type="ChEBI" id="CHEBI:15377"/>
        <dbReference type="ChEBI" id="CHEBI:15378"/>
        <dbReference type="ChEBI" id="CHEBI:16301"/>
        <dbReference type="ChEBI" id="CHEBI:16480"/>
        <dbReference type="ChEBI" id="CHEBI:55376"/>
        <dbReference type="ChEBI" id="CHEBI:60344"/>
    </reaction>
    <physiologicalReaction direction="right-to-left" evidence="1">
        <dbReference type="Rhea" id="RHEA:77713"/>
    </physiologicalReaction>
</comment>
<comment type="catalytic activity">
    <reaction evidence="1">
        <text>H2O2 + AH2 = A + 2 H2O</text>
        <dbReference type="Rhea" id="RHEA:30275"/>
        <dbReference type="ChEBI" id="CHEBI:13193"/>
        <dbReference type="ChEBI" id="CHEBI:15377"/>
        <dbReference type="ChEBI" id="CHEBI:16240"/>
        <dbReference type="ChEBI" id="CHEBI:17499"/>
    </reaction>
</comment>
<comment type="subunit">
    <text evidence="7">Monomer.</text>
</comment>
<comment type="subcellular location">
    <subcellularLocation>
        <location evidence="1">Cytoplasm</location>
        <location evidence="1">Sarcoplasm</location>
    </subcellularLocation>
</comment>
<comment type="mass spectrometry"/>
<comment type="similarity">
    <text evidence="6">Belongs to the globin family.</text>
</comment>
<gene>
    <name evidence="1" type="primary">MB</name>
</gene>
<proteinExistence type="evidence at protein level"/>